<sequence length="394" mass="44838">MRLNRQFIRTQLIAQNILSKNAPAKRENATENPAAVLEKAYSRLKSQSSTGGINQFNYSKTSVSGNSGTFSKVYQSANDRTVTDTGEETVIQSQNPYESESDIRIKILDEKYSRMNAINKTKSDPLGYIKDKYQNSKSPYFRSDLSAAERQAAYDNETEWLFKGKAQNYNLQDAVFRNVTFHGEVEAENEKVYQRGQVNQQLQVLLNRNHIHIPEGTELTFTITPIDYQVRVSGTDDQDLIKQIEQVLQSGDNSKELFLHIMKSQSSDSAQFSEEAYKKYQAAREMYEVTGYHLKDLEVIDGRYVTPEGRDLMDVYKEELEKDPVQKQTASYAISYYRSELSKIAEAGYNAIPDFILSIDYSNGSLRDVGQSKSYGTGDTGWLEALKRQTGVNY</sequence>
<dbReference type="EMBL" id="AB006424">
    <property type="protein sequence ID" value="BAA33103.1"/>
    <property type="molecule type" value="Genomic_DNA"/>
</dbReference>
<dbReference type="EMBL" id="AL009126">
    <property type="protein sequence ID" value="CAB11999.1"/>
    <property type="molecule type" value="Genomic_DNA"/>
</dbReference>
<dbReference type="PIR" id="B69748">
    <property type="entry name" value="B69748"/>
</dbReference>
<dbReference type="RefSeq" id="NP_388087.1">
    <property type="nucleotide sequence ID" value="NC_000964.3"/>
</dbReference>
<dbReference type="RefSeq" id="WP_003246341.1">
    <property type="nucleotide sequence ID" value="NZ_OZ025638.1"/>
</dbReference>
<dbReference type="FunCoup" id="O31437">
    <property type="interactions" value="42"/>
</dbReference>
<dbReference type="STRING" id="224308.BSU02050"/>
<dbReference type="PaxDb" id="224308-BSU02050"/>
<dbReference type="DNASU" id="938493"/>
<dbReference type="EnsemblBacteria" id="CAB11999">
    <property type="protein sequence ID" value="CAB11999"/>
    <property type="gene ID" value="BSU_02050"/>
</dbReference>
<dbReference type="GeneID" id="938493"/>
<dbReference type="KEGG" id="bsu:BSU02050"/>
<dbReference type="PATRIC" id="fig|224308.179.peg.211"/>
<dbReference type="eggNOG" id="ENOG502ZA8F">
    <property type="taxonomic scope" value="Bacteria"/>
</dbReference>
<dbReference type="InParanoid" id="O31437"/>
<dbReference type="OrthoDB" id="2056069at2"/>
<dbReference type="BioCyc" id="BSUB:BSU02050-MONOMER"/>
<dbReference type="Proteomes" id="UP000001570">
    <property type="component" value="Chromosome"/>
</dbReference>
<dbReference type="InterPro" id="IPR032617">
    <property type="entry name" value="DUF4885"/>
</dbReference>
<dbReference type="Pfam" id="PF16226">
    <property type="entry name" value="DUF4885"/>
    <property type="match status" value="1"/>
</dbReference>
<protein>
    <recommendedName>
        <fullName>Uncharacterized protein YbdO</fullName>
    </recommendedName>
</protein>
<accession>O31437</accession>
<feature type="chain" id="PRO_0000049460" description="Uncharacterized protein YbdO">
    <location>
        <begin position="1"/>
        <end position="394"/>
    </location>
</feature>
<gene>
    <name type="primary">ybdO</name>
    <name type="ordered locus">BSU02050</name>
</gene>
<reference key="1">
    <citation type="submission" date="1997-07" db="EMBL/GenBank/DDBJ databases">
        <title>Sequence analysis of the 70kb region between 17 and 23 degree of the Bacillus subtilis chromosome.</title>
        <authorList>
            <person name="Haga K."/>
            <person name="Liu H."/>
            <person name="Yasumoto K."/>
            <person name="Takahashi H."/>
            <person name="Yoshikawa H."/>
        </authorList>
    </citation>
    <scope>NUCLEOTIDE SEQUENCE [GENOMIC DNA]</scope>
    <source>
        <strain>168</strain>
    </source>
</reference>
<reference key="2">
    <citation type="journal article" date="1997" name="Nature">
        <title>The complete genome sequence of the Gram-positive bacterium Bacillus subtilis.</title>
        <authorList>
            <person name="Kunst F."/>
            <person name="Ogasawara N."/>
            <person name="Moszer I."/>
            <person name="Albertini A.M."/>
            <person name="Alloni G."/>
            <person name="Azevedo V."/>
            <person name="Bertero M.G."/>
            <person name="Bessieres P."/>
            <person name="Bolotin A."/>
            <person name="Borchert S."/>
            <person name="Borriss R."/>
            <person name="Boursier L."/>
            <person name="Brans A."/>
            <person name="Braun M."/>
            <person name="Brignell S.C."/>
            <person name="Bron S."/>
            <person name="Brouillet S."/>
            <person name="Bruschi C.V."/>
            <person name="Caldwell B."/>
            <person name="Capuano V."/>
            <person name="Carter N.M."/>
            <person name="Choi S.-K."/>
            <person name="Codani J.-J."/>
            <person name="Connerton I.F."/>
            <person name="Cummings N.J."/>
            <person name="Daniel R.A."/>
            <person name="Denizot F."/>
            <person name="Devine K.M."/>
            <person name="Duesterhoeft A."/>
            <person name="Ehrlich S.D."/>
            <person name="Emmerson P.T."/>
            <person name="Entian K.-D."/>
            <person name="Errington J."/>
            <person name="Fabret C."/>
            <person name="Ferrari E."/>
            <person name="Foulger D."/>
            <person name="Fritz C."/>
            <person name="Fujita M."/>
            <person name="Fujita Y."/>
            <person name="Fuma S."/>
            <person name="Galizzi A."/>
            <person name="Galleron N."/>
            <person name="Ghim S.-Y."/>
            <person name="Glaser P."/>
            <person name="Goffeau A."/>
            <person name="Golightly E.J."/>
            <person name="Grandi G."/>
            <person name="Guiseppi G."/>
            <person name="Guy B.J."/>
            <person name="Haga K."/>
            <person name="Haiech J."/>
            <person name="Harwood C.R."/>
            <person name="Henaut A."/>
            <person name="Hilbert H."/>
            <person name="Holsappel S."/>
            <person name="Hosono S."/>
            <person name="Hullo M.-F."/>
            <person name="Itaya M."/>
            <person name="Jones L.-M."/>
            <person name="Joris B."/>
            <person name="Karamata D."/>
            <person name="Kasahara Y."/>
            <person name="Klaerr-Blanchard M."/>
            <person name="Klein C."/>
            <person name="Kobayashi Y."/>
            <person name="Koetter P."/>
            <person name="Koningstein G."/>
            <person name="Krogh S."/>
            <person name="Kumano M."/>
            <person name="Kurita K."/>
            <person name="Lapidus A."/>
            <person name="Lardinois S."/>
            <person name="Lauber J."/>
            <person name="Lazarevic V."/>
            <person name="Lee S.-M."/>
            <person name="Levine A."/>
            <person name="Liu H."/>
            <person name="Masuda S."/>
            <person name="Mauel C."/>
            <person name="Medigue C."/>
            <person name="Medina N."/>
            <person name="Mellado R.P."/>
            <person name="Mizuno M."/>
            <person name="Moestl D."/>
            <person name="Nakai S."/>
            <person name="Noback M."/>
            <person name="Noone D."/>
            <person name="O'Reilly M."/>
            <person name="Ogawa K."/>
            <person name="Ogiwara A."/>
            <person name="Oudega B."/>
            <person name="Park S.-H."/>
            <person name="Parro V."/>
            <person name="Pohl T.M."/>
            <person name="Portetelle D."/>
            <person name="Porwollik S."/>
            <person name="Prescott A.M."/>
            <person name="Presecan E."/>
            <person name="Pujic P."/>
            <person name="Purnelle B."/>
            <person name="Rapoport G."/>
            <person name="Rey M."/>
            <person name="Reynolds S."/>
            <person name="Rieger M."/>
            <person name="Rivolta C."/>
            <person name="Rocha E."/>
            <person name="Roche B."/>
            <person name="Rose M."/>
            <person name="Sadaie Y."/>
            <person name="Sato T."/>
            <person name="Scanlan E."/>
            <person name="Schleich S."/>
            <person name="Schroeter R."/>
            <person name="Scoffone F."/>
            <person name="Sekiguchi J."/>
            <person name="Sekowska A."/>
            <person name="Seror S.J."/>
            <person name="Serror P."/>
            <person name="Shin B.-S."/>
            <person name="Soldo B."/>
            <person name="Sorokin A."/>
            <person name="Tacconi E."/>
            <person name="Takagi T."/>
            <person name="Takahashi H."/>
            <person name="Takemaru K."/>
            <person name="Takeuchi M."/>
            <person name="Tamakoshi A."/>
            <person name="Tanaka T."/>
            <person name="Terpstra P."/>
            <person name="Tognoni A."/>
            <person name="Tosato V."/>
            <person name="Uchiyama S."/>
            <person name="Vandenbol M."/>
            <person name="Vannier F."/>
            <person name="Vassarotti A."/>
            <person name="Viari A."/>
            <person name="Wambutt R."/>
            <person name="Wedler E."/>
            <person name="Wedler H."/>
            <person name="Weitzenegger T."/>
            <person name="Winters P."/>
            <person name="Wipat A."/>
            <person name="Yamamoto H."/>
            <person name="Yamane K."/>
            <person name="Yasumoto K."/>
            <person name="Yata K."/>
            <person name="Yoshida K."/>
            <person name="Yoshikawa H.-F."/>
            <person name="Zumstein E."/>
            <person name="Yoshikawa H."/>
            <person name="Danchin A."/>
        </authorList>
    </citation>
    <scope>NUCLEOTIDE SEQUENCE [LARGE SCALE GENOMIC DNA]</scope>
    <source>
        <strain>168</strain>
    </source>
</reference>
<name>YBDO_BACSU</name>
<keyword id="KW-1185">Reference proteome</keyword>
<organism>
    <name type="scientific">Bacillus subtilis (strain 168)</name>
    <dbReference type="NCBI Taxonomy" id="224308"/>
    <lineage>
        <taxon>Bacteria</taxon>
        <taxon>Bacillati</taxon>
        <taxon>Bacillota</taxon>
        <taxon>Bacilli</taxon>
        <taxon>Bacillales</taxon>
        <taxon>Bacillaceae</taxon>
        <taxon>Bacillus</taxon>
    </lineage>
</organism>
<proteinExistence type="predicted"/>